<protein>
    <recommendedName>
        <fullName evidence="1">Large ribosomal subunit protein uL22</fullName>
    </recommendedName>
    <alternativeName>
        <fullName evidence="2">50S ribosomal protein L22</fullName>
    </alternativeName>
</protein>
<sequence length="117" mass="12771">MAEQISSAKAEARTVRIAPRKARLVVDLIRGKSVAEALAILQFTPRAASPIVEKVLKSAIANAEHNYDLESANLYVSEAYVNEGATLKRFRPRAKGMASPINKRTSHVVVVVSEKND</sequence>
<comment type="function">
    <text evidence="1">This protein binds specifically to 23S rRNA; its binding is stimulated by other ribosomal proteins, e.g. L4, L17, and L20. It is important during the early stages of 50S assembly. It makes multiple contacts with different domains of the 23S rRNA in the assembled 50S subunit and ribosome (By similarity).</text>
</comment>
<comment type="function">
    <text evidence="1">The globular domain of the protein is located near the polypeptide exit tunnel on the outside of the subunit, while an extended beta-hairpin is found that lines the wall of the exit tunnel in the center of the 70S ribosome.</text>
</comment>
<comment type="subunit">
    <text evidence="1">Part of the 50S ribosomal subunit.</text>
</comment>
<comment type="similarity">
    <text evidence="1">Belongs to the universal ribosomal protein uL22 family.</text>
</comment>
<name>RL22_LACGA</name>
<accession>Q046C0</accession>
<gene>
    <name evidence="1" type="primary">rplV</name>
    <name type="ordered locus">LGAS_0296</name>
</gene>
<feature type="chain" id="PRO_1000052592" description="Large ribosomal subunit protein uL22">
    <location>
        <begin position="1"/>
        <end position="117"/>
    </location>
</feature>
<keyword id="KW-0687">Ribonucleoprotein</keyword>
<keyword id="KW-0689">Ribosomal protein</keyword>
<keyword id="KW-0694">RNA-binding</keyword>
<keyword id="KW-0699">rRNA-binding</keyword>
<proteinExistence type="inferred from homology"/>
<organism>
    <name type="scientific">Lactobacillus gasseri (strain ATCC 33323 / DSM 20243 / BCRC 14619 / CIP 102991 / JCM 1131 / KCTC 3163 / NCIMB 11718 / NCTC 13722 / AM63)</name>
    <dbReference type="NCBI Taxonomy" id="324831"/>
    <lineage>
        <taxon>Bacteria</taxon>
        <taxon>Bacillati</taxon>
        <taxon>Bacillota</taxon>
        <taxon>Bacilli</taxon>
        <taxon>Lactobacillales</taxon>
        <taxon>Lactobacillaceae</taxon>
        <taxon>Lactobacillus</taxon>
    </lineage>
</organism>
<dbReference type="EMBL" id="CP000413">
    <property type="protein sequence ID" value="ABJ59702.1"/>
    <property type="molecule type" value="Genomic_DNA"/>
</dbReference>
<dbReference type="RefSeq" id="WP_003649465.1">
    <property type="nucleotide sequence ID" value="NZ_WBMG01000001.1"/>
</dbReference>
<dbReference type="SMR" id="Q046C0"/>
<dbReference type="GeneID" id="83569759"/>
<dbReference type="KEGG" id="lga:LGAS_0296"/>
<dbReference type="HOGENOM" id="CLU_083987_3_3_9"/>
<dbReference type="BioCyc" id="LGAS324831:G1G6Y-294-MONOMER"/>
<dbReference type="Proteomes" id="UP000000664">
    <property type="component" value="Chromosome"/>
</dbReference>
<dbReference type="GO" id="GO:0022625">
    <property type="term" value="C:cytosolic large ribosomal subunit"/>
    <property type="evidence" value="ECO:0007669"/>
    <property type="project" value="TreeGrafter"/>
</dbReference>
<dbReference type="GO" id="GO:0019843">
    <property type="term" value="F:rRNA binding"/>
    <property type="evidence" value="ECO:0007669"/>
    <property type="project" value="UniProtKB-UniRule"/>
</dbReference>
<dbReference type="GO" id="GO:0003735">
    <property type="term" value="F:structural constituent of ribosome"/>
    <property type="evidence" value="ECO:0007669"/>
    <property type="project" value="InterPro"/>
</dbReference>
<dbReference type="GO" id="GO:0006412">
    <property type="term" value="P:translation"/>
    <property type="evidence" value="ECO:0007669"/>
    <property type="project" value="UniProtKB-UniRule"/>
</dbReference>
<dbReference type="CDD" id="cd00336">
    <property type="entry name" value="Ribosomal_L22"/>
    <property type="match status" value="1"/>
</dbReference>
<dbReference type="FunFam" id="3.90.470.10:FF:000001">
    <property type="entry name" value="50S ribosomal protein L22"/>
    <property type="match status" value="1"/>
</dbReference>
<dbReference type="Gene3D" id="3.90.470.10">
    <property type="entry name" value="Ribosomal protein L22/L17"/>
    <property type="match status" value="1"/>
</dbReference>
<dbReference type="HAMAP" id="MF_01331_B">
    <property type="entry name" value="Ribosomal_uL22_B"/>
    <property type="match status" value="1"/>
</dbReference>
<dbReference type="InterPro" id="IPR001063">
    <property type="entry name" value="Ribosomal_uL22"/>
</dbReference>
<dbReference type="InterPro" id="IPR005727">
    <property type="entry name" value="Ribosomal_uL22_bac/chlpt-type"/>
</dbReference>
<dbReference type="InterPro" id="IPR047867">
    <property type="entry name" value="Ribosomal_uL22_bac/org-type"/>
</dbReference>
<dbReference type="InterPro" id="IPR036394">
    <property type="entry name" value="Ribosomal_uL22_sf"/>
</dbReference>
<dbReference type="NCBIfam" id="TIGR01044">
    <property type="entry name" value="rplV_bact"/>
    <property type="match status" value="1"/>
</dbReference>
<dbReference type="PANTHER" id="PTHR13501">
    <property type="entry name" value="CHLOROPLAST 50S RIBOSOMAL PROTEIN L22-RELATED"/>
    <property type="match status" value="1"/>
</dbReference>
<dbReference type="PANTHER" id="PTHR13501:SF8">
    <property type="entry name" value="LARGE RIBOSOMAL SUBUNIT PROTEIN UL22M"/>
    <property type="match status" value="1"/>
</dbReference>
<dbReference type="Pfam" id="PF00237">
    <property type="entry name" value="Ribosomal_L22"/>
    <property type="match status" value="1"/>
</dbReference>
<dbReference type="SUPFAM" id="SSF54843">
    <property type="entry name" value="Ribosomal protein L22"/>
    <property type="match status" value="1"/>
</dbReference>
<reference key="1">
    <citation type="journal article" date="2006" name="Proc. Natl. Acad. Sci. U.S.A.">
        <title>Comparative genomics of the lactic acid bacteria.</title>
        <authorList>
            <person name="Makarova K.S."/>
            <person name="Slesarev A."/>
            <person name="Wolf Y.I."/>
            <person name="Sorokin A."/>
            <person name="Mirkin B."/>
            <person name="Koonin E.V."/>
            <person name="Pavlov A."/>
            <person name="Pavlova N."/>
            <person name="Karamychev V."/>
            <person name="Polouchine N."/>
            <person name="Shakhova V."/>
            <person name="Grigoriev I."/>
            <person name="Lou Y."/>
            <person name="Rohksar D."/>
            <person name="Lucas S."/>
            <person name="Huang K."/>
            <person name="Goodstein D.M."/>
            <person name="Hawkins T."/>
            <person name="Plengvidhya V."/>
            <person name="Welker D."/>
            <person name="Hughes J."/>
            <person name="Goh Y."/>
            <person name="Benson A."/>
            <person name="Baldwin K."/>
            <person name="Lee J.-H."/>
            <person name="Diaz-Muniz I."/>
            <person name="Dosti B."/>
            <person name="Smeianov V."/>
            <person name="Wechter W."/>
            <person name="Barabote R."/>
            <person name="Lorca G."/>
            <person name="Altermann E."/>
            <person name="Barrangou R."/>
            <person name="Ganesan B."/>
            <person name="Xie Y."/>
            <person name="Rawsthorne H."/>
            <person name="Tamir D."/>
            <person name="Parker C."/>
            <person name="Breidt F."/>
            <person name="Broadbent J.R."/>
            <person name="Hutkins R."/>
            <person name="O'Sullivan D."/>
            <person name="Steele J."/>
            <person name="Unlu G."/>
            <person name="Saier M.H. Jr."/>
            <person name="Klaenhammer T."/>
            <person name="Richardson P."/>
            <person name="Kozyavkin S."/>
            <person name="Weimer B.C."/>
            <person name="Mills D.A."/>
        </authorList>
    </citation>
    <scope>NUCLEOTIDE SEQUENCE [LARGE SCALE GENOMIC DNA]</scope>
    <source>
        <strain>ATCC 33323 / DSM 20243 / BCRC 14619 / CIP 102991 / JCM 1131 / KCTC 3163 / NCIMB 11718 / NCTC 13722 / AM63</strain>
    </source>
</reference>
<evidence type="ECO:0000255" key="1">
    <source>
        <dbReference type="HAMAP-Rule" id="MF_01331"/>
    </source>
</evidence>
<evidence type="ECO:0000305" key="2"/>